<evidence type="ECO:0000269" key="1">
    <source>
    </source>
</evidence>
<evidence type="ECO:0000269" key="2">
    <source>
    </source>
</evidence>
<evidence type="ECO:0000269" key="3">
    <source>
    </source>
</evidence>
<evidence type="ECO:0000269" key="4">
    <source>
    </source>
</evidence>
<evidence type="ECO:0000269" key="5">
    <source>
    </source>
</evidence>
<evidence type="ECO:0000305" key="6"/>
<evidence type="ECO:0000312" key="7">
    <source>
        <dbReference type="EMBL" id="CCP45569.1"/>
    </source>
</evidence>
<name>PPE44_MYCTU</name>
<protein>
    <recommendedName>
        <fullName evidence="6">PPE family protein PPE44</fullName>
    </recommendedName>
</protein>
<reference key="1">
    <citation type="journal article" date="1998" name="Nature">
        <title>Deciphering the biology of Mycobacterium tuberculosis from the complete genome sequence.</title>
        <authorList>
            <person name="Cole S.T."/>
            <person name="Brosch R."/>
            <person name="Parkhill J."/>
            <person name="Garnier T."/>
            <person name="Churcher C.M."/>
            <person name="Harris D.E."/>
            <person name="Gordon S.V."/>
            <person name="Eiglmeier K."/>
            <person name="Gas S."/>
            <person name="Barry C.E. III"/>
            <person name="Tekaia F."/>
            <person name="Badcock K."/>
            <person name="Basham D."/>
            <person name="Brown D."/>
            <person name="Chillingworth T."/>
            <person name="Connor R."/>
            <person name="Davies R.M."/>
            <person name="Devlin K."/>
            <person name="Feltwell T."/>
            <person name="Gentles S."/>
            <person name="Hamlin N."/>
            <person name="Holroyd S."/>
            <person name="Hornsby T."/>
            <person name="Jagels K."/>
            <person name="Krogh A."/>
            <person name="McLean J."/>
            <person name="Moule S."/>
            <person name="Murphy L.D."/>
            <person name="Oliver S."/>
            <person name="Osborne J."/>
            <person name="Quail M.A."/>
            <person name="Rajandream M.A."/>
            <person name="Rogers J."/>
            <person name="Rutter S."/>
            <person name="Seeger K."/>
            <person name="Skelton S."/>
            <person name="Squares S."/>
            <person name="Squares R."/>
            <person name="Sulston J.E."/>
            <person name="Taylor K."/>
            <person name="Whitehead S."/>
            <person name="Barrell B.G."/>
        </authorList>
    </citation>
    <scope>NUCLEOTIDE SEQUENCE [LARGE SCALE GENOMIC DNA]</scope>
    <source>
        <strain>ATCC 25618 / H37Rv</strain>
    </source>
</reference>
<reference key="2">
    <citation type="journal article" date="2008" name="Vaccine">
        <title>Immunogenicity and protective efficacy of tuberculosis subunit vaccines expressing PPE44 (Rv2770c).</title>
        <authorList>
            <person name="Romano M."/>
            <person name="Rindi L."/>
            <person name="Korf H."/>
            <person name="Bonanni D."/>
            <person name="Adnet P.-Y."/>
            <person name="Jurion F."/>
            <person name="Garzelli C."/>
            <person name="Huygen K."/>
        </authorList>
    </citation>
    <scope>BIOTECHNOLOGY</scope>
    <scope>POTENTIAL USE AS A VACCINE</scope>
    <source>
        <strain>ATCC 25618 / H37Rv</strain>
    </source>
</reference>
<reference key="3">
    <citation type="journal article" date="2011" name="BMC Microbiol.">
        <title>Identification of a human immunodominant T-cell epitope of mycobacterium tuberculosis antigen PPE44.</title>
        <authorList>
            <person name="Cuccu B."/>
            <person name="Freer G."/>
            <person name="Genovesi A."/>
            <person name="Garzelli C."/>
            <person name="Rindi L."/>
        </authorList>
    </citation>
    <scope>BIOTECHNOLOGY</scope>
</reference>
<reference key="4">
    <citation type="journal article" date="2017" name="Int. Immunopharmacol.">
        <title>Mycobacterium tuberculosis PPE44 (Rv2770c) is involved in response to multiple stresses and promotes the macrophage expression of IL-12 p40 and IL-6 via the p38, ERK, and NF-kappaB signaling axis.</title>
        <authorList>
            <person name="Yu Z."/>
            <person name="Zhang C."/>
            <person name="Zhou M."/>
            <person name="Li Q."/>
            <person name="Li H."/>
            <person name="Duan W."/>
            <person name="Li X."/>
            <person name="Feng Y."/>
            <person name="Xie J."/>
        </authorList>
    </citation>
    <scope>FUNCTION</scope>
    <scope>SUBCELLULAR LOCATION</scope>
    <source>
        <strain>H37Rv</strain>
    </source>
</reference>
<reference key="5">
    <citation type="journal article" date="2019" name="Rep. Biochem. Mol. Biol.">
        <title>Increasing Cellular Immune Response in Liposomal Formulations of DOTAP Encapsulated by Fusion Protein Hspx, PPE44, And Esxv, as a Potential Tuberculosis Vaccine Candidate.</title>
        <authorList>
            <person name="Mansury D."/>
            <person name="Ghazvini K."/>
            <person name="Amel Jamehdar S."/>
            <person name="Badiee A."/>
            <person name="Tafaghodi M."/>
            <person name="Nikpoor A.R."/>
            <person name="Amini Y."/>
            <person name="Jaafari M.R."/>
        </authorList>
    </citation>
    <scope>BIOTECHNOLOGY</scope>
</reference>
<reference key="6">
    <citation type="journal article" date="2020" name="Iran. J. Basic Med. Sci.">
        <title>A new DNA vaccine expressing HspX-PPE44-EsxV fusion antigens of Mycobacterium tuberculosis induced strong immune responses.</title>
        <authorList>
            <person name="Moradi B."/>
            <person name="Sankian M."/>
            <person name="Amini Y."/>
            <person name="Gholoobi A."/>
            <person name="Meshkat Z."/>
        </authorList>
    </citation>
    <scope>BIOTECHNOLOGY</scope>
</reference>
<proteinExistence type="evidence at protein level"/>
<dbReference type="EMBL" id="AL123456">
    <property type="protein sequence ID" value="CCP45569.1"/>
    <property type="molecule type" value="Genomic_DNA"/>
</dbReference>
<dbReference type="PIR" id="A70882">
    <property type="entry name" value="A70882"/>
</dbReference>
<dbReference type="RefSeq" id="WP_003906903.1">
    <property type="nucleotide sequence ID" value="NZ_NVQJ01000020.1"/>
</dbReference>
<dbReference type="RefSeq" id="YP_177677.1">
    <property type="nucleotide sequence ID" value="NC_000962.3"/>
</dbReference>
<dbReference type="SMR" id="P9WHZ3"/>
<dbReference type="STRING" id="83332.Rv2770c"/>
<dbReference type="PaxDb" id="83332-Rv2770c"/>
<dbReference type="DNASU" id="888456"/>
<dbReference type="GeneID" id="888456"/>
<dbReference type="KEGG" id="mtu:Rv2770c"/>
<dbReference type="KEGG" id="mtv:RVBD_2770c"/>
<dbReference type="TubercuList" id="Rv2770c"/>
<dbReference type="eggNOG" id="COG5651">
    <property type="taxonomic scope" value="Bacteria"/>
</dbReference>
<dbReference type="InParanoid" id="P9WHZ3"/>
<dbReference type="OrthoDB" id="4752888at2"/>
<dbReference type="PhylomeDB" id="P9WHZ3"/>
<dbReference type="PHI-base" id="PHI:9051"/>
<dbReference type="Proteomes" id="UP000001584">
    <property type="component" value="Chromosome"/>
</dbReference>
<dbReference type="GO" id="GO:0009986">
    <property type="term" value="C:cell surface"/>
    <property type="evidence" value="ECO:0007669"/>
    <property type="project" value="UniProtKB-SubCell"/>
</dbReference>
<dbReference type="GO" id="GO:0052572">
    <property type="term" value="P:response to host immune response"/>
    <property type="evidence" value="ECO:0000318"/>
    <property type="project" value="GO_Central"/>
</dbReference>
<dbReference type="Gene3D" id="1.20.1260.20">
    <property type="entry name" value="PPE superfamily"/>
    <property type="match status" value="1"/>
</dbReference>
<dbReference type="InterPro" id="IPR022171">
    <property type="entry name" value="PPE_C"/>
</dbReference>
<dbReference type="InterPro" id="IPR000030">
    <property type="entry name" value="PPE_dom"/>
</dbReference>
<dbReference type="InterPro" id="IPR038332">
    <property type="entry name" value="PPE_sf"/>
</dbReference>
<dbReference type="PANTHER" id="PTHR46766">
    <property type="entry name" value="GLUTAMINE-RICH PROTEIN 2"/>
    <property type="match status" value="1"/>
</dbReference>
<dbReference type="PANTHER" id="PTHR46766:SF1">
    <property type="entry name" value="GLUTAMINE-RICH PROTEIN 2"/>
    <property type="match status" value="1"/>
</dbReference>
<dbReference type="Pfam" id="PF00823">
    <property type="entry name" value="PPE"/>
    <property type="match status" value="1"/>
</dbReference>
<dbReference type="Pfam" id="PF12484">
    <property type="entry name" value="PPE-SVP"/>
    <property type="match status" value="1"/>
</dbReference>
<dbReference type="SUPFAM" id="SSF140459">
    <property type="entry name" value="PE/PPE dimer-like"/>
    <property type="match status" value="1"/>
</dbReference>
<comment type="function">
    <text evidence="3">Virulence factor that modulates host innate immune response (PubMed:28743081). Induces the production of the pro-inflammatory cytokines IL-6 and IL-12p40 in macrophages via NF-kappa-B, ERK1/2 and p38 signaling axis (PubMed:28743081). Can enhance M.smegmatis survival within macrophages and under stresses such as H(2)O(2), SDS, diamide exposure and low pH condition (PubMed:28743081). Promotes the death of macrophage by apoptosis in the later stage of infection (PubMed:28743081).</text>
</comment>
<comment type="subcellular location">
    <subcellularLocation>
        <location evidence="3">Secreted</location>
        <location evidence="3">Cell wall</location>
    </subcellularLocation>
    <subcellularLocation>
        <location evidence="3">Cell surface</location>
    </subcellularLocation>
</comment>
<comment type="biotechnology">
    <text evidence="1 2 4 5">Expressed and presented to the immune system throughout the different stages of the infection, which makes PPE44 a very promising antigen candidate to be included in tuberculosis subunit vaccines (PubMed:18822333). The immunodominant T-cell epitope p1L (amino acids 1-20) could be useful in the design of anti-tuberculosis vaccines and in the immunological diagnosis of M.tuberculosis infection (PubMed:21787411). The recombinant HspX-PPE44-EsxV fusion protein induces strong immune responses and is a potential tuberculosis vaccine candidate (PubMed:30805395, PubMed:32774813).</text>
</comment>
<comment type="similarity">
    <text evidence="6">Belongs to the mycobacterial PPE family.</text>
</comment>
<keyword id="KW-0134">Cell wall</keyword>
<keyword id="KW-1185">Reference proteome</keyword>
<keyword id="KW-0964">Secreted</keyword>
<keyword id="KW-0843">Virulence</keyword>
<gene>
    <name evidence="7" type="primary">PPE44</name>
    <name evidence="7" type="ordered locus">Rv2770c</name>
</gene>
<accession>P9WHZ3</accession>
<accession>L0TC75</accession>
<accession>Q79FA7</accession>
<accession>Q7D6M0</accession>
<sequence length="382" mass="37467">MDFGALPPEVNSARMYGGAGAADLLAAAAAWNGIAVEVSTAASSVGSVITRLSTEHWMGPASLSMAAAVQPYLVWLTCTAESSALAAAQAMASAAAFETAFALTVPPAEVVANRALLAELTATNILGQNVSAIAATEARYGEMWAQDASAMYGYAAASAVAARLNPLTRPSHITNPAGLAHQAAAVGQAGASAFARQVGLSHLISDVADAVLSFASPVMSAADTGLEAVRQFLNLDVPLFVESAFHGLGGVADFATAAIGNMTLLADAMGTVGGAAPGGGAAAAVAHAVAPAGVGGTALTADLGNASVVGRLSVPASWSTAAPATAAGAALDGTGWAVPEEDGPIAVMPPAPGMVVAANSVGADSGPRYGVKPIVMPKHGLF</sequence>
<organism>
    <name type="scientific">Mycobacterium tuberculosis (strain ATCC 25618 / H37Rv)</name>
    <dbReference type="NCBI Taxonomy" id="83332"/>
    <lineage>
        <taxon>Bacteria</taxon>
        <taxon>Bacillati</taxon>
        <taxon>Actinomycetota</taxon>
        <taxon>Actinomycetes</taxon>
        <taxon>Mycobacteriales</taxon>
        <taxon>Mycobacteriaceae</taxon>
        <taxon>Mycobacterium</taxon>
        <taxon>Mycobacterium tuberculosis complex</taxon>
    </lineage>
</organism>
<feature type="chain" id="PRO_0000379590" description="PPE family protein PPE44">
    <location>
        <begin position="1"/>
        <end position="382"/>
    </location>
</feature>